<comment type="catalytic activity">
    <reaction evidence="1">
        <text>tRNA(Arg) + L-arginine + ATP = L-arginyl-tRNA(Arg) + AMP + diphosphate</text>
        <dbReference type="Rhea" id="RHEA:20301"/>
        <dbReference type="Rhea" id="RHEA-COMP:9658"/>
        <dbReference type="Rhea" id="RHEA-COMP:9673"/>
        <dbReference type="ChEBI" id="CHEBI:30616"/>
        <dbReference type="ChEBI" id="CHEBI:32682"/>
        <dbReference type="ChEBI" id="CHEBI:33019"/>
        <dbReference type="ChEBI" id="CHEBI:78442"/>
        <dbReference type="ChEBI" id="CHEBI:78513"/>
        <dbReference type="ChEBI" id="CHEBI:456215"/>
        <dbReference type="EC" id="6.1.1.19"/>
    </reaction>
</comment>
<comment type="subunit">
    <text evidence="1">Monomer.</text>
</comment>
<comment type="subcellular location">
    <subcellularLocation>
        <location evidence="1">Cytoplasm</location>
    </subcellularLocation>
</comment>
<comment type="similarity">
    <text evidence="1">Belongs to the class-I aminoacyl-tRNA synthetase family.</text>
</comment>
<sequence length="563" mass="63121">MDTKTLIASEIAKVVPELEQDAIFNLLETPKNSDMGDLAFPAFSLAKVLRKAPQMIASELAEQIDESQFEKVVAVGPYINFFLDKAKISSQVLEQVITAGSDYAQQDEGQGRNVAIDMSSPNIAKPFSIGHLRSTVIGDSLAHIFAKMGYKPVKINHLGDWGKQFGMLIVAYKKWGDEAAVQAHPIDELLKLYVRINAEAETDPTVDEEAREWFRKLEDGDKEATELWQWFRDESLLEFNRLYDQLHVTFDSYNGEAFYNDKMDEVLDLLEAKNLLVESKGAQVVNLEKYGIEHPALIKKSDGATLYITRDLAAALYRKRTYDFAKSVYVVGNEQAAHFKQLKAVLKEMGYDWSDDMTHVAFGLVTKGGAKLSTRKGNVILLEPTVAEAINRAASQIEAKNPNLADKEAVAHAVGVGAIKFYDLKTDRMNGYDFDLEAMVSFEGETGPYVQYAHARIQSILRKADFTPSATTTYSLADAESWEIIKLIQDFPRIIKRTSDNFEPSIMAKFAINLAQSFNKYYAHTRILDDNSERDNRLALCYATATVLKEALRLLGVDAPNEM</sequence>
<name>SYR_STRPC</name>
<keyword id="KW-0030">Aminoacyl-tRNA synthetase</keyword>
<keyword id="KW-0067">ATP-binding</keyword>
<keyword id="KW-0963">Cytoplasm</keyword>
<keyword id="KW-0436">Ligase</keyword>
<keyword id="KW-0547">Nucleotide-binding</keyword>
<keyword id="KW-0648">Protein biosynthesis</keyword>
<reference key="1">
    <citation type="journal article" date="2006" name="Proc. Natl. Acad. Sci. U.S.A.">
        <title>Molecular genetic anatomy of inter- and intraserotype variation in the human bacterial pathogen group A Streptococcus.</title>
        <authorList>
            <person name="Beres S.B."/>
            <person name="Richter E.W."/>
            <person name="Nagiec M.J."/>
            <person name="Sumby P."/>
            <person name="Porcella S.F."/>
            <person name="DeLeo F.R."/>
            <person name="Musser J.M."/>
        </authorList>
    </citation>
    <scope>NUCLEOTIDE SEQUENCE [LARGE SCALE GENOMIC DNA]</scope>
    <source>
        <strain>MGAS9429</strain>
    </source>
</reference>
<protein>
    <recommendedName>
        <fullName evidence="1">Arginine--tRNA ligase</fullName>
        <ecNumber evidence="1">6.1.1.19</ecNumber>
    </recommendedName>
    <alternativeName>
        <fullName evidence="1">Arginyl-tRNA synthetase</fullName>
        <shortName evidence="1">ArgRS</shortName>
    </alternativeName>
</protein>
<proteinExistence type="inferred from homology"/>
<dbReference type="EC" id="6.1.1.19" evidence="1"/>
<dbReference type="EMBL" id="CP000259">
    <property type="protein sequence ID" value="ABF33006.1"/>
    <property type="molecule type" value="Genomic_DNA"/>
</dbReference>
<dbReference type="RefSeq" id="WP_002991367.1">
    <property type="nucleotide sequence ID" value="NC_008021.1"/>
</dbReference>
<dbReference type="SMR" id="Q1JJG7"/>
<dbReference type="KEGG" id="spk:MGAS9429_Spy1819"/>
<dbReference type="HOGENOM" id="CLU_006406_6_1_9"/>
<dbReference type="Proteomes" id="UP000002433">
    <property type="component" value="Chromosome"/>
</dbReference>
<dbReference type="GO" id="GO:0005737">
    <property type="term" value="C:cytoplasm"/>
    <property type="evidence" value="ECO:0007669"/>
    <property type="project" value="UniProtKB-SubCell"/>
</dbReference>
<dbReference type="GO" id="GO:0004814">
    <property type="term" value="F:arginine-tRNA ligase activity"/>
    <property type="evidence" value="ECO:0007669"/>
    <property type="project" value="UniProtKB-UniRule"/>
</dbReference>
<dbReference type="GO" id="GO:0005524">
    <property type="term" value="F:ATP binding"/>
    <property type="evidence" value="ECO:0007669"/>
    <property type="project" value="UniProtKB-UniRule"/>
</dbReference>
<dbReference type="GO" id="GO:0006420">
    <property type="term" value="P:arginyl-tRNA aminoacylation"/>
    <property type="evidence" value="ECO:0007669"/>
    <property type="project" value="UniProtKB-UniRule"/>
</dbReference>
<dbReference type="CDD" id="cd07956">
    <property type="entry name" value="Anticodon_Ia_Arg"/>
    <property type="match status" value="1"/>
</dbReference>
<dbReference type="CDD" id="cd00671">
    <property type="entry name" value="ArgRS_core"/>
    <property type="match status" value="1"/>
</dbReference>
<dbReference type="FunFam" id="3.40.50.620:FF:000116">
    <property type="entry name" value="Arginine--tRNA ligase"/>
    <property type="match status" value="1"/>
</dbReference>
<dbReference type="FunFam" id="1.10.730.10:FF:000006">
    <property type="entry name" value="Arginyl-tRNA synthetase 2, mitochondrial"/>
    <property type="match status" value="1"/>
</dbReference>
<dbReference type="Gene3D" id="3.30.1360.70">
    <property type="entry name" value="Arginyl tRNA synthetase N-terminal domain"/>
    <property type="match status" value="1"/>
</dbReference>
<dbReference type="Gene3D" id="3.40.50.620">
    <property type="entry name" value="HUPs"/>
    <property type="match status" value="1"/>
</dbReference>
<dbReference type="Gene3D" id="1.10.730.10">
    <property type="entry name" value="Isoleucyl-tRNA Synthetase, Domain 1"/>
    <property type="match status" value="1"/>
</dbReference>
<dbReference type="HAMAP" id="MF_00123">
    <property type="entry name" value="Arg_tRNA_synth"/>
    <property type="match status" value="1"/>
</dbReference>
<dbReference type="InterPro" id="IPR001278">
    <property type="entry name" value="Arg-tRNA-ligase"/>
</dbReference>
<dbReference type="InterPro" id="IPR005148">
    <property type="entry name" value="Arg-tRNA-synth_N"/>
</dbReference>
<dbReference type="InterPro" id="IPR036695">
    <property type="entry name" value="Arg-tRNA-synth_N_sf"/>
</dbReference>
<dbReference type="InterPro" id="IPR035684">
    <property type="entry name" value="ArgRS_core"/>
</dbReference>
<dbReference type="InterPro" id="IPR008909">
    <property type="entry name" value="DALR_anticod-bd"/>
</dbReference>
<dbReference type="InterPro" id="IPR014729">
    <property type="entry name" value="Rossmann-like_a/b/a_fold"/>
</dbReference>
<dbReference type="InterPro" id="IPR009080">
    <property type="entry name" value="tRNAsynth_Ia_anticodon-bd"/>
</dbReference>
<dbReference type="NCBIfam" id="TIGR00456">
    <property type="entry name" value="argS"/>
    <property type="match status" value="1"/>
</dbReference>
<dbReference type="PANTHER" id="PTHR11956:SF5">
    <property type="entry name" value="ARGININE--TRNA LIGASE, CYTOPLASMIC"/>
    <property type="match status" value="1"/>
</dbReference>
<dbReference type="PANTHER" id="PTHR11956">
    <property type="entry name" value="ARGINYL-TRNA SYNTHETASE"/>
    <property type="match status" value="1"/>
</dbReference>
<dbReference type="Pfam" id="PF03485">
    <property type="entry name" value="Arg_tRNA_synt_N"/>
    <property type="match status" value="1"/>
</dbReference>
<dbReference type="Pfam" id="PF05746">
    <property type="entry name" value="DALR_1"/>
    <property type="match status" value="1"/>
</dbReference>
<dbReference type="Pfam" id="PF00750">
    <property type="entry name" value="tRNA-synt_1d"/>
    <property type="match status" value="1"/>
</dbReference>
<dbReference type="PRINTS" id="PR01038">
    <property type="entry name" value="TRNASYNTHARG"/>
</dbReference>
<dbReference type="SMART" id="SM01016">
    <property type="entry name" value="Arg_tRNA_synt_N"/>
    <property type="match status" value="1"/>
</dbReference>
<dbReference type="SMART" id="SM00836">
    <property type="entry name" value="DALR_1"/>
    <property type="match status" value="1"/>
</dbReference>
<dbReference type="SUPFAM" id="SSF47323">
    <property type="entry name" value="Anticodon-binding domain of a subclass of class I aminoacyl-tRNA synthetases"/>
    <property type="match status" value="1"/>
</dbReference>
<dbReference type="SUPFAM" id="SSF55190">
    <property type="entry name" value="Arginyl-tRNA synthetase (ArgRS), N-terminal 'additional' domain"/>
    <property type="match status" value="1"/>
</dbReference>
<dbReference type="SUPFAM" id="SSF52374">
    <property type="entry name" value="Nucleotidylyl transferase"/>
    <property type="match status" value="1"/>
</dbReference>
<organism>
    <name type="scientific">Streptococcus pyogenes serotype M12 (strain MGAS9429)</name>
    <dbReference type="NCBI Taxonomy" id="370551"/>
    <lineage>
        <taxon>Bacteria</taxon>
        <taxon>Bacillati</taxon>
        <taxon>Bacillota</taxon>
        <taxon>Bacilli</taxon>
        <taxon>Lactobacillales</taxon>
        <taxon>Streptococcaceae</taxon>
        <taxon>Streptococcus</taxon>
    </lineage>
</organism>
<feature type="chain" id="PRO_1000018129" description="Arginine--tRNA ligase">
    <location>
        <begin position="1"/>
        <end position="563"/>
    </location>
</feature>
<feature type="short sequence motif" description="'HIGH' region">
    <location>
        <begin position="121"/>
        <end position="131"/>
    </location>
</feature>
<evidence type="ECO:0000255" key="1">
    <source>
        <dbReference type="HAMAP-Rule" id="MF_00123"/>
    </source>
</evidence>
<gene>
    <name evidence="1" type="primary">argS</name>
    <name type="ordered locus">MGAS9429_Spy1819</name>
</gene>
<accession>Q1JJG7</accession>